<sequence length="70" mass="8186">MIFKVFYQEKLTEVPVRENTKVLYLEATSEKDVRTKLNKFAYNIEFVQSVTGAHLEYEKENADLTLAEIV</sequence>
<organism>
    <name type="scientific">Bacillus cereus (strain G9842)</name>
    <dbReference type="NCBI Taxonomy" id="405531"/>
    <lineage>
        <taxon>Bacteria</taxon>
        <taxon>Bacillati</taxon>
        <taxon>Bacillota</taxon>
        <taxon>Bacilli</taxon>
        <taxon>Bacillales</taxon>
        <taxon>Bacillaceae</taxon>
        <taxon>Bacillus</taxon>
        <taxon>Bacillus cereus group</taxon>
    </lineage>
</organism>
<proteinExistence type="inferred from homology"/>
<evidence type="ECO:0000255" key="1">
    <source>
        <dbReference type="HAMAP-Rule" id="MF_01553"/>
    </source>
</evidence>
<dbReference type="EC" id="2.7.7.6" evidence="1"/>
<dbReference type="EMBL" id="CP001186">
    <property type="protein sequence ID" value="ACK94119.1"/>
    <property type="molecule type" value="Genomic_DNA"/>
</dbReference>
<dbReference type="RefSeq" id="WP_000576435.1">
    <property type="nucleotide sequence ID" value="NC_011772.1"/>
</dbReference>
<dbReference type="SMR" id="B7IVL3"/>
<dbReference type="KEGG" id="bcg:BCG9842_B1161"/>
<dbReference type="HOGENOM" id="CLU_187518_0_0_9"/>
<dbReference type="Proteomes" id="UP000006744">
    <property type="component" value="Chromosome"/>
</dbReference>
<dbReference type="GO" id="GO:0000428">
    <property type="term" value="C:DNA-directed RNA polymerase complex"/>
    <property type="evidence" value="ECO:0007669"/>
    <property type="project" value="UniProtKB-KW"/>
</dbReference>
<dbReference type="GO" id="GO:0003677">
    <property type="term" value="F:DNA binding"/>
    <property type="evidence" value="ECO:0007669"/>
    <property type="project" value="UniProtKB-UniRule"/>
</dbReference>
<dbReference type="GO" id="GO:0003899">
    <property type="term" value="F:DNA-directed RNA polymerase activity"/>
    <property type="evidence" value="ECO:0007669"/>
    <property type="project" value="UniProtKB-UniRule"/>
</dbReference>
<dbReference type="GO" id="GO:0006351">
    <property type="term" value="P:DNA-templated transcription"/>
    <property type="evidence" value="ECO:0007669"/>
    <property type="project" value="UniProtKB-UniRule"/>
</dbReference>
<dbReference type="Gene3D" id="3.10.20.730">
    <property type="entry name" value="RNAP, epsilon subunit-like"/>
    <property type="match status" value="1"/>
</dbReference>
<dbReference type="HAMAP" id="MF_01553">
    <property type="entry name" value="RNApol_bact_RpoY"/>
    <property type="match status" value="1"/>
</dbReference>
<dbReference type="InterPro" id="IPR009907">
    <property type="entry name" value="RpoY"/>
</dbReference>
<dbReference type="NCBIfam" id="NF010188">
    <property type="entry name" value="PRK13667.1"/>
    <property type="match status" value="1"/>
</dbReference>
<dbReference type="Pfam" id="PF07288">
    <property type="entry name" value="RpoY"/>
    <property type="match status" value="1"/>
</dbReference>
<gene>
    <name evidence="1" type="primary">rpoY</name>
    <name type="ordered locus">BCG9842_B1161</name>
</gene>
<feature type="chain" id="PRO_1000199616" description="DNA-directed RNA polymerase subunit epsilon">
    <location>
        <begin position="1"/>
        <end position="70"/>
    </location>
</feature>
<comment type="function">
    <text evidence="1">A non-essential component of RNA polymerase (RNAP).</text>
</comment>
<comment type="catalytic activity">
    <reaction evidence="1">
        <text>RNA(n) + a ribonucleoside 5'-triphosphate = RNA(n+1) + diphosphate</text>
        <dbReference type="Rhea" id="RHEA:21248"/>
        <dbReference type="Rhea" id="RHEA-COMP:14527"/>
        <dbReference type="Rhea" id="RHEA-COMP:17342"/>
        <dbReference type="ChEBI" id="CHEBI:33019"/>
        <dbReference type="ChEBI" id="CHEBI:61557"/>
        <dbReference type="ChEBI" id="CHEBI:140395"/>
        <dbReference type="EC" id="2.7.7.6"/>
    </reaction>
</comment>
<comment type="subunit">
    <text evidence="1">RNAP is composed of a core of 2 alpha, a beta and a beta' subunit. The core is associated with a delta subunit, and at least one of epsilon or omega. When a sigma factor is associated with the core the holoenzyme is formed, which can initiate transcription.</text>
</comment>
<comment type="similarity">
    <text evidence="1">Belongs to the RNA polymerase subunit epsilon family.</text>
</comment>
<reference key="1">
    <citation type="submission" date="2008-10" db="EMBL/GenBank/DDBJ databases">
        <title>Genome sequence of Bacillus cereus G9842.</title>
        <authorList>
            <person name="Dodson R.J."/>
            <person name="Durkin A.S."/>
            <person name="Rosovitz M.J."/>
            <person name="Rasko D.A."/>
            <person name="Hoffmaster A."/>
            <person name="Ravel J."/>
            <person name="Sutton G."/>
        </authorList>
    </citation>
    <scope>NUCLEOTIDE SEQUENCE [LARGE SCALE GENOMIC DNA]</scope>
    <source>
        <strain>G9842</strain>
    </source>
</reference>
<name>RPOY_BACC2</name>
<protein>
    <recommendedName>
        <fullName evidence="1">DNA-directed RNA polymerase subunit epsilon</fullName>
        <shortName evidence="1">RNAP epsilon subunit</shortName>
        <ecNumber evidence="1">2.7.7.6</ecNumber>
    </recommendedName>
    <alternativeName>
        <fullName evidence="1">RNA polymerase epsilon subunit</fullName>
    </alternativeName>
    <alternativeName>
        <fullName evidence="1">Transcriptase subunit epsilon</fullName>
    </alternativeName>
</protein>
<accession>B7IVL3</accession>
<keyword id="KW-0240">DNA-directed RNA polymerase</keyword>
<keyword id="KW-0548">Nucleotidyltransferase</keyword>
<keyword id="KW-0804">Transcription</keyword>
<keyword id="KW-0808">Transferase</keyword>